<comment type="function">
    <text evidence="2">Involved in base excision repair of DNA damaged by oxidation or by mutagenic agents. Acts as a DNA glycosylase that recognizes and removes damaged bases. Has a preference for oxidized purines, such as 7,8-dihydro-8-oxoguanine (8-oxoG). Has AP (apurinic/apyrimidinic) lyase activity and introduces nicks in the DNA strand. Cleaves the DNA backbone by beta-delta elimination to generate a single-strand break at the site of the removed base with both 3'- and 5'-phosphates.</text>
</comment>
<comment type="catalytic activity">
    <reaction evidence="2">
        <text>Hydrolysis of DNA containing ring-opened 7-methylguanine residues, releasing 2,6-diamino-4-hydroxy-5-(N-methyl)formamidopyrimidine.</text>
        <dbReference type="EC" id="3.2.2.23"/>
    </reaction>
</comment>
<comment type="catalytic activity">
    <reaction evidence="2">
        <text>2'-deoxyribonucleotide-(2'-deoxyribose 5'-phosphate)-2'-deoxyribonucleotide-DNA = a 3'-end 2'-deoxyribonucleotide-(2,3-dehydro-2,3-deoxyribose 5'-phosphate)-DNA + a 5'-end 5'-phospho-2'-deoxyribonucleoside-DNA + H(+)</text>
        <dbReference type="Rhea" id="RHEA:66592"/>
        <dbReference type="Rhea" id="RHEA-COMP:13180"/>
        <dbReference type="Rhea" id="RHEA-COMP:16897"/>
        <dbReference type="Rhea" id="RHEA-COMP:17067"/>
        <dbReference type="ChEBI" id="CHEBI:15378"/>
        <dbReference type="ChEBI" id="CHEBI:136412"/>
        <dbReference type="ChEBI" id="CHEBI:157695"/>
        <dbReference type="ChEBI" id="CHEBI:167181"/>
        <dbReference type="EC" id="4.2.99.18"/>
    </reaction>
</comment>
<comment type="cofactor">
    <cofactor evidence="2">
        <name>Zn(2+)</name>
        <dbReference type="ChEBI" id="CHEBI:29105"/>
    </cofactor>
    <text evidence="2">Binds 1 zinc ion per subunit.</text>
</comment>
<comment type="subunit">
    <text evidence="2">Monomer.</text>
</comment>
<comment type="similarity">
    <text evidence="2">Belongs to the FPG family.</text>
</comment>
<dbReference type="EC" id="3.2.2.23" evidence="2"/>
<dbReference type="EC" id="4.2.99.18" evidence="2"/>
<dbReference type="EMBL" id="CR555306">
    <property type="protein sequence ID" value="CAI06883.1"/>
    <property type="molecule type" value="Genomic_DNA"/>
</dbReference>
<dbReference type="RefSeq" id="WP_011236611.1">
    <property type="nucleotide sequence ID" value="NC_006513.1"/>
</dbReference>
<dbReference type="SMR" id="Q5P728"/>
<dbReference type="STRING" id="76114.ebA1401"/>
<dbReference type="KEGG" id="eba:ebA1401"/>
<dbReference type="eggNOG" id="COG0266">
    <property type="taxonomic scope" value="Bacteria"/>
</dbReference>
<dbReference type="HOGENOM" id="CLU_038423_1_1_4"/>
<dbReference type="OrthoDB" id="9800855at2"/>
<dbReference type="Proteomes" id="UP000006552">
    <property type="component" value="Chromosome"/>
</dbReference>
<dbReference type="GO" id="GO:0034039">
    <property type="term" value="F:8-oxo-7,8-dihydroguanine DNA N-glycosylase activity"/>
    <property type="evidence" value="ECO:0007669"/>
    <property type="project" value="TreeGrafter"/>
</dbReference>
<dbReference type="GO" id="GO:0140078">
    <property type="term" value="F:class I DNA-(apurinic or apyrimidinic site) endonuclease activity"/>
    <property type="evidence" value="ECO:0007669"/>
    <property type="project" value="UniProtKB-EC"/>
</dbReference>
<dbReference type="GO" id="GO:0003684">
    <property type="term" value="F:damaged DNA binding"/>
    <property type="evidence" value="ECO:0007669"/>
    <property type="project" value="InterPro"/>
</dbReference>
<dbReference type="GO" id="GO:0008270">
    <property type="term" value="F:zinc ion binding"/>
    <property type="evidence" value="ECO:0007669"/>
    <property type="project" value="UniProtKB-UniRule"/>
</dbReference>
<dbReference type="GO" id="GO:0006284">
    <property type="term" value="P:base-excision repair"/>
    <property type="evidence" value="ECO:0007669"/>
    <property type="project" value="InterPro"/>
</dbReference>
<dbReference type="CDD" id="cd08966">
    <property type="entry name" value="EcFpg-like_N"/>
    <property type="match status" value="1"/>
</dbReference>
<dbReference type="FunFam" id="1.10.8.50:FF:000003">
    <property type="entry name" value="Formamidopyrimidine-DNA glycosylase"/>
    <property type="match status" value="1"/>
</dbReference>
<dbReference type="Gene3D" id="1.10.8.50">
    <property type="match status" value="1"/>
</dbReference>
<dbReference type="Gene3D" id="3.20.190.10">
    <property type="entry name" value="MutM-like, N-terminal"/>
    <property type="match status" value="1"/>
</dbReference>
<dbReference type="HAMAP" id="MF_00103">
    <property type="entry name" value="Fapy_DNA_glycosyl"/>
    <property type="match status" value="1"/>
</dbReference>
<dbReference type="InterPro" id="IPR015886">
    <property type="entry name" value="DNA_glyclase/AP_lyase_DNA-bd"/>
</dbReference>
<dbReference type="InterPro" id="IPR015887">
    <property type="entry name" value="DNA_glyclase_Znf_dom_DNA_BS"/>
</dbReference>
<dbReference type="InterPro" id="IPR020629">
    <property type="entry name" value="Formamido-pyr_DNA_Glyclase"/>
</dbReference>
<dbReference type="InterPro" id="IPR012319">
    <property type="entry name" value="FPG_cat"/>
</dbReference>
<dbReference type="InterPro" id="IPR035937">
    <property type="entry name" value="MutM-like_N-ter"/>
</dbReference>
<dbReference type="InterPro" id="IPR010979">
    <property type="entry name" value="Ribosomal_uS13-like_H2TH"/>
</dbReference>
<dbReference type="InterPro" id="IPR000214">
    <property type="entry name" value="Znf_DNA_glyclase/AP_lyase"/>
</dbReference>
<dbReference type="InterPro" id="IPR010663">
    <property type="entry name" value="Znf_FPG/IleRS"/>
</dbReference>
<dbReference type="NCBIfam" id="TIGR00577">
    <property type="entry name" value="fpg"/>
    <property type="match status" value="1"/>
</dbReference>
<dbReference type="NCBIfam" id="NF002211">
    <property type="entry name" value="PRK01103.1"/>
    <property type="match status" value="1"/>
</dbReference>
<dbReference type="PANTHER" id="PTHR22993">
    <property type="entry name" value="FORMAMIDOPYRIMIDINE-DNA GLYCOSYLASE"/>
    <property type="match status" value="1"/>
</dbReference>
<dbReference type="PANTHER" id="PTHR22993:SF9">
    <property type="entry name" value="FORMAMIDOPYRIMIDINE-DNA GLYCOSYLASE"/>
    <property type="match status" value="1"/>
</dbReference>
<dbReference type="Pfam" id="PF01149">
    <property type="entry name" value="Fapy_DNA_glyco"/>
    <property type="match status" value="1"/>
</dbReference>
<dbReference type="Pfam" id="PF06831">
    <property type="entry name" value="H2TH"/>
    <property type="match status" value="1"/>
</dbReference>
<dbReference type="Pfam" id="PF06827">
    <property type="entry name" value="zf-FPG_IleRS"/>
    <property type="match status" value="1"/>
</dbReference>
<dbReference type="SMART" id="SM00898">
    <property type="entry name" value="Fapy_DNA_glyco"/>
    <property type="match status" value="1"/>
</dbReference>
<dbReference type="SMART" id="SM01232">
    <property type="entry name" value="H2TH"/>
    <property type="match status" value="1"/>
</dbReference>
<dbReference type="SUPFAM" id="SSF57716">
    <property type="entry name" value="Glucocorticoid receptor-like (DNA-binding domain)"/>
    <property type="match status" value="1"/>
</dbReference>
<dbReference type="SUPFAM" id="SSF81624">
    <property type="entry name" value="N-terminal domain of MutM-like DNA repair proteins"/>
    <property type="match status" value="1"/>
</dbReference>
<dbReference type="SUPFAM" id="SSF46946">
    <property type="entry name" value="S13-like H2TH domain"/>
    <property type="match status" value="1"/>
</dbReference>
<dbReference type="PROSITE" id="PS51068">
    <property type="entry name" value="FPG_CAT"/>
    <property type="match status" value="1"/>
</dbReference>
<dbReference type="PROSITE" id="PS01242">
    <property type="entry name" value="ZF_FPG_1"/>
    <property type="match status" value="1"/>
</dbReference>
<dbReference type="PROSITE" id="PS51066">
    <property type="entry name" value="ZF_FPG_2"/>
    <property type="match status" value="1"/>
</dbReference>
<sequence length="271" mass="29710">MPELPEVEITCRGIRPLVAGRTLTALEVRNPRLRQPVPADLAQTLVGERLQGVRRRAKYLLLDFPHGSVLVHLGMSGSLRVVSADEPAGVHDHVDLVFGAEALRLRDPRRFGLVLWHAGDGLSHPLLAALGREPLERGFTGAWLHEATRGVRLSIKQTLMDAHRVVGVGNIYASESLFRARIHPLAPAGAIGPQRLARLVASVRETLLAAIDAGGSTLRDFVGGDGRAGYFQQQYFVYGREGLACRVCATPVRRVVIGQRSTFFCPRCQRR</sequence>
<organism>
    <name type="scientific">Aromatoleum aromaticum (strain DSM 19018 / LMG 30748 / EbN1)</name>
    <name type="common">Azoarcus sp. (strain EbN1)</name>
    <dbReference type="NCBI Taxonomy" id="76114"/>
    <lineage>
        <taxon>Bacteria</taxon>
        <taxon>Pseudomonadati</taxon>
        <taxon>Pseudomonadota</taxon>
        <taxon>Betaproteobacteria</taxon>
        <taxon>Rhodocyclales</taxon>
        <taxon>Rhodocyclaceae</taxon>
        <taxon>Aromatoleum</taxon>
    </lineage>
</organism>
<keyword id="KW-0227">DNA damage</keyword>
<keyword id="KW-0234">DNA repair</keyword>
<keyword id="KW-0238">DNA-binding</keyword>
<keyword id="KW-0326">Glycosidase</keyword>
<keyword id="KW-0378">Hydrolase</keyword>
<keyword id="KW-0456">Lyase</keyword>
<keyword id="KW-0479">Metal-binding</keyword>
<keyword id="KW-0511">Multifunctional enzyme</keyword>
<keyword id="KW-1185">Reference proteome</keyword>
<keyword id="KW-0862">Zinc</keyword>
<keyword id="KW-0863">Zinc-finger</keyword>
<name>FPG_AROAE</name>
<proteinExistence type="inferred from homology"/>
<protein>
    <recommendedName>
        <fullName evidence="2">Formamidopyrimidine-DNA glycosylase</fullName>
        <shortName evidence="2">Fapy-DNA glycosylase</shortName>
        <ecNumber evidence="2">3.2.2.23</ecNumber>
    </recommendedName>
    <alternativeName>
        <fullName evidence="2">DNA-(apurinic or apyrimidinic site) lyase MutM</fullName>
        <shortName evidence="2">AP lyase MutM</shortName>
        <ecNumber evidence="2">4.2.99.18</ecNumber>
    </alternativeName>
</protein>
<reference key="1">
    <citation type="journal article" date="2005" name="Arch. Microbiol.">
        <title>The genome sequence of an anaerobic aromatic-degrading denitrifying bacterium, strain EbN1.</title>
        <authorList>
            <person name="Rabus R."/>
            <person name="Kube M."/>
            <person name="Heider J."/>
            <person name="Beck A."/>
            <person name="Heitmann K."/>
            <person name="Widdel F."/>
            <person name="Reinhardt R."/>
        </authorList>
    </citation>
    <scope>NUCLEOTIDE SEQUENCE [LARGE SCALE GENOMIC DNA]</scope>
    <source>
        <strain>DSM 19018 / LMG 30748 / EbN1</strain>
    </source>
</reference>
<feature type="initiator methionine" description="Removed" evidence="1">
    <location>
        <position position="1"/>
    </location>
</feature>
<feature type="chain" id="PRO_0000228410" description="Formamidopyrimidine-DNA glycosylase">
    <location>
        <begin position="2"/>
        <end position="271"/>
    </location>
</feature>
<feature type="zinc finger region" description="FPG-type" evidence="2">
    <location>
        <begin position="236"/>
        <end position="270"/>
    </location>
</feature>
<feature type="active site" description="Schiff-base intermediate with DNA" evidence="2">
    <location>
        <position position="2"/>
    </location>
</feature>
<feature type="active site" description="Proton donor" evidence="2">
    <location>
        <position position="3"/>
    </location>
</feature>
<feature type="active site" description="Proton donor; for beta-elimination activity" evidence="2">
    <location>
        <position position="58"/>
    </location>
</feature>
<feature type="active site" description="Proton donor; for delta-elimination activity" evidence="2">
    <location>
        <position position="260"/>
    </location>
</feature>
<feature type="binding site" evidence="2">
    <location>
        <position position="91"/>
    </location>
    <ligand>
        <name>DNA</name>
        <dbReference type="ChEBI" id="CHEBI:16991"/>
    </ligand>
</feature>
<feature type="binding site" evidence="2">
    <location>
        <position position="109"/>
    </location>
    <ligand>
        <name>DNA</name>
        <dbReference type="ChEBI" id="CHEBI:16991"/>
    </ligand>
</feature>
<accession>Q5P728</accession>
<gene>
    <name evidence="2" type="primary">mutM</name>
    <name evidence="2" type="synonym">fpg</name>
    <name type="ordered locus">AZOSEA07600</name>
    <name type="ORF">ebA1401</name>
</gene>
<evidence type="ECO:0000250" key="1"/>
<evidence type="ECO:0000255" key="2">
    <source>
        <dbReference type="HAMAP-Rule" id="MF_00103"/>
    </source>
</evidence>